<accession>Q9ZJH5</accession>
<organism>
    <name type="scientific">Helicobacter pylori (strain J99 / ATCC 700824)</name>
    <name type="common">Campylobacter pylori J99</name>
    <dbReference type="NCBI Taxonomy" id="85963"/>
    <lineage>
        <taxon>Bacteria</taxon>
        <taxon>Pseudomonadati</taxon>
        <taxon>Campylobacterota</taxon>
        <taxon>Epsilonproteobacteria</taxon>
        <taxon>Campylobacterales</taxon>
        <taxon>Helicobacteraceae</taxon>
        <taxon>Helicobacter</taxon>
    </lineage>
</organism>
<comment type="function">
    <text evidence="1">PPIases accelerate the folding of proteins. It catalyzes the cis-trans isomerization of proline imidic peptide bonds in oligopeptides (By similarity).</text>
</comment>
<comment type="catalytic activity">
    <reaction>
        <text>[protein]-peptidylproline (omega=180) = [protein]-peptidylproline (omega=0)</text>
        <dbReference type="Rhea" id="RHEA:16237"/>
        <dbReference type="Rhea" id="RHEA-COMP:10747"/>
        <dbReference type="Rhea" id="RHEA-COMP:10748"/>
        <dbReference type="ChEBI" id="CHEBI:83833"/>
        <dbReference type="ChEBI" id="CHEBI:83834"/>
        <dbReference type="EC" id="5.2.1.8"/>
    </reaction>
</comment>
<comment type="similarity">
    <text evidence="3">Belongs to the cyclophilin-type PPIase family.</text>
</comment>
<keyword id="KW-0413">Isomerase</keyword>
<keyword id="KW-0697">Rotamase</keyword>
<dbReference type="EC" id="5.2.1.8"/>
<dbReference type="EMBL" id="AE001439">
    <property type="protein sequence ID" value="AAD06910.1"/>
    <property type="molecule type" value="Genomic_DNA"/>
</dbReference>
<dbReference type="PIR" id="D71820">
    <property type="entry name" value="D71820"/>
</dbReference>
<dbReference type="RefSeq" id="WP_010882641.1">
    <property type="nucleotide sequence ID" value="NC_000921.1"/>
</dbReference>
<dbReference type="SMR" id="Q9ZJH5"/>
<dbReference type="KEGG" id="hpj:jhp_1334"/>
<dbReference type="PATRIC" id="fig|85963.30.peg.1219"/>
<dbReference type="eggNOG" id="COG0652">
    <property type="taxonomic scope" value="Bacteria"/>
</dbReference>
<dbReference type="Proteomes" id="UP000000804">
    <property type="component" value="Chromosome"/>
</dbReference>
<dbReference type="GO" id="GO:0003755">
    <property type="term" value="F:peptidyl-prolyl cis-trans isomerase activity"/>
    <property type="evidence" value="ECO:0007669"/>
    <property type="project" value="UniProtKB-KW"/>
</dbReference>
<dbReference type="GO" id="GO:0006457">
    <property type="term" value="P:protein folding"/>
    <property type="evidence" value="ECO:0007669"/>
    <property type="project" value="InterPro"/>
</dbReference>
<dbReference type="CDD" id="cd00317">
    <property type="entry name" value="cyclophilin"/>
    <property type="match status" value="1"/>
</dbReference>
<dbReference type="Gene3D" id="2.40.100.10">
    <property type="entry name" value="Cyclophilin-like"/>
    <property type="match status" value="1"/>
</dbReference>
<dbReference type="InterPro" id="IPR029000">
    <property type="entry name" value="Cyclophilin-like_dom_sf"/>
</dbReference>
<dbReference type="InterPro" id="IPR024936">
    <property type="entry name" value="Cyclophilin-type_PPIase"/>
</dbReference>
<dbReference type="InterPro" id="IPR020892">
    <property type="entry name" value="Cyclophilin-type_PPIase_CS"/>
</dbReference>
<dbReference type="InterPro" id="IPR002130">
    <property type="entry name" value="Cyclophilin-type_PPIase_dom"/>
</dbReference>
<dbReference type="InterPro" id="IPR044666">
    <property type="entry name" value="Cyclophilin_A-like"/>
</dbReference>
<dbReference type="PANTHER" id="PTHR45625">
    <property type="entry name" value="PEPTIDYL-PROLYL CIS-TRANS ISOMERASE-RELATED"/>
    <property type="match status" value="1"/>
</dbReference>
<dbReference type="PANTHER" id="PTHR45625:SF4">
    <property type="entry name" value="PEPTIDYLPROLYL ISOMERASE DOMAIN AND WD REPEAT-CONTAINING PROTEIN 1"/>
    <property type="match status" value="1"/>
</dbReference>
<dbReference type="Pfam" id="PF00160">
    <property type="entry name" value="Pro_isomerase"/>
    <property type="match status" value="1"/>
</dbReference>
<dbReference type="PIRSF" id="PIRSF001467">
    <property type="entry name" value="Peptidylpro_ismrse"/>
    <property type="match status" value="1"/>
</dbReference>
<dbReference type="PRINTS" id="PR00153">
    <property type="entry name" value="CSAPPISMRASE"/>
</dbReference>
<dbReference type="SUPFAM" id="SSF50891">
    <property type="entry name" value="Cyclophilin-like"/>
    <property type="match status" value="1"/>
</dbReference>
<dbReference type="PROSITE" id="PS00170">
    <property type="entry name" value="CSA_PPIASE_1"/>
    <property type="match status" value="1"/>
</dbReference>
<dbReference type="PROSITE" id="PS50072">
    <property type="entry name" value="CSA_PPIASE_2"/>
    <property type="match status" value="1"/>
</dbReference>
<gene>
    <name type="primary">ppiA</name>
    <name type="ordered locus">jhp_1334</name>
</gene>
<proteinExistence type="inferred from homology"/>
<name>PPIA_HELPJ</name>
<sequence length="162" mass="17631">MKPIKTYDIKEEELAKTAYATIKTNKGNITLELFYKDAPQAVSNFVTLAKEGFYNGLNFHRVIAGFVAQGGCPYGTGTGGPEHRIKCEVAHNPNKHQRGSISMAHAGRDTGGSQFFLCFVDLPHLDGEHTVFGKITSAESLSVLDKIKQGDIIESVVFSPSL</sequence>
<protein>
    <recommendedName>
        <fullName>Peptidyl-prolyl cis-trans isomerase</fullName>
        <shortName>PPIase</shortName>
        <ecNumber>5.2.1.8</ecNumber>
    </recommendedName>
    <alternativeName>
        <fullName>Rotamase</fullName>
    </alternativeName>
</protein>
<reference key="1">
    <citation type="journal article" date="1999" name="Nature">
        <title>Genomic sequence comparison of two unrelated isolates of the human gastric pathogen Helicobacter pylori.</title>
        <authorList>
            <person name="Alm R.A."/>
            <person name="Ling L.-S.L."/>
            <person name="Moir D.T."/>
            <person name="King B.L."/>
            <person name="Brown E.D."/>
            <person name="Doig P.C."/>
            <person name="Smith D.R."/>
            <person name="Noonan B."/>
            <person name="Guild B.C."/>
            <person name="deJonge B.L."/>
            <person name="Carmel G."/>
            <person name="Tummino P.J."/>
            <person name="Caruso A."/>
            <person name="Uria-Nickelsen M."/>
            <person name="Mills D.M."/>
            <person name="Ives C."/>
            <person name="Gibson R."/>
            <person name="Merberg D."/>
            <person name="Mills S.D."/>
            <person name="Jiang Q."/>
            <person name="Taylor D.E."/>
            <person name="Vovis G.F."/>
            <person name="Trust T.J."/>
        </authorList>
    </citation>
    <scope>NUCLEOTIDE SEQUENCE [LARGE SCALE GENOMIC DNA]</scope>
    <source>
        <strain>J99 / ATCC 700824</strain>
    </source>
</reference>
<evidence type="ECO:0000250" key="1"/>
<evidence type="ECO:0000255" key="2">
    <source>
        <dbReference type="PROSITE-ProRule" id="PRU00156"/>
    </source>
</evidence>
<evidence type="ECO:0000305" key="3"/>
<feature type="chain" id="PRO_0000064200" description="Peptidyl-prolyl cis-trans isomerase">
    <location>
        <begin position="1"/>
        <end position="162"/>
    </location>
</feature>
<feature type="domain" description="PPIase cyclophilin-type" evidence="2">
    <location>
        <begin position="16"/>
        <end position="162"/>
    </location>
</feature>